<reference key="1">
    <citation type="journal article" date="2004" name="Proc. Natl. Acad. Sci. U.S.A.">
        <title>Complete genomes of two clinical Staphylococcus aureus strains: evidence for the rapid evolution of virulence and drug resistance.</title>
        <authorList>
            <person name="Holden M.T.G."/>
            <person name="Feil E.J."/>
            <person name="Lindsay J.A."/>
            <person name="Peacock S.J."/>
            <person name="Day N.P.J."/>
            <person name="Enright M.C."/>
            <person name="Foster T.J."/>
            <person name="Moore C.E."/>
            <person name="Hurst L."/>
            <person name="Atkin R."/>
            <person name="Barron A."/>
            <person name="Bason N."/>
            <person name="Bentley S.D."/>
            <person name="Chillingworth C."/>
            <person name="Chillingworth T."/>
            <person name="Churcher C."/>
            <person name="Clark L."/>
            <person name="Corton C."/>
            <person name="Cronin A."/>
            <person name="Doggett J."/>
            <person name="Dowd L."/>
            <person name="Feltwell T."/>
            <person name="Hance Z."/>
            <person name="Harris B."/>
            <person name="Hauser H."/>
            <person name="Holroyd S."/>
            <person name="Jagels K."/>
            <person name="James K.D."/>
            <person name="Lennard N."/>
            <person name="Line A."/>
            <person name="Mayes R."/>
            <person name="Moule S."/>
            <person name="Mungall K."/>
            <person name="Ormond D."/>
            <person name="Quail M.A."/>
            <person name="Rabbinowitsch E."/>
            <person name="Rutherford K.M."/>
            <person name="Sanders M."/>
            <person name="Sharp S."/>
            <person name="Simmonds M."/>
            <person name="Stevens K."/>
            <person name="Whitehead S."/>
            <person name="Barrell B.G."/>
            <person name="Spratt B.G."/>
            <person name="Parkhill J."/>
        </authorList>
    </citation>
    <scope>NUCLEOTIDE SEQUENCE [LARGE SCALE GENOMIC DNA]</scope>
    <source>
        <strain>MSSA476</strain>
    </source>
</reference>
<evidence type="ECO:0000250" key="1"/>
<evidence type="ECO:0000305" key="2"/>
<name>Y1637_STAAS</name>
<dbReference type="EMBL" id="BX571857">
    <property type="protein sequence ID" value="CAG43439.1"/>
    <property type="molecule type" value="Genomic_DNA"/>
</dbReference>
<dbReference type="RefSeq" id="WP_000634175.1">
    <property type="nucleotide sequence ID" value="NC_002953.3"/>
</dbReference>
<dbReference type="SMR" id="Q6G8L7"/>
<dbReference type="KEGG" id="sas:SAS1637"/>
<dbReference type="HOGENOM" id="CLU_049301_16_0_9"/>
<dbReference type="GO" id="GO:0005737">
    <property type="term" value="C:cytoplasm"/>
    <property type="evidence" value="ECO:0007669"/>
    <property type="project" value="UniProtKB-SubCell"/>
</dbReference>
<dbReference type="CDD" id="cd00293">
    <property type="entry name" value="USP-like"/>
    <property type="match status" value="1"/>
</dbReference>
<dbReference type="Gene3D" id="3.40.50.620">
    <property type="entry name" value="HUPs"/>
    <property type="match status" value="1"/>
</dbReference>
<dbReference type="InterPro" id="IPR014729">
    <property type="entry name" value="Rossmann-like_a/b/a_fold"/>
</dbReference>
<dbReference type="InterPro" id="IPR006015">
    <property type="entry name" value="Universal_stress_UspA"/>
</dbReference>
<dbReference type="InterPro" id="IPR006016">
    <property type="entry name" value="UspA"/>
</dbReference>
<dbReference type="PANTHER" id="PTHR46268">
    <property type="entry name" value="STRESS RESPONSE PROTEIN NHAX"/>
    <property type="match status" value="1"/>
</dbReference>
<dbReference type="PANTHER" id="PTHR46268:SF6">
    <property type="entry name" value="UNIVERSAL STRESS PROTEIN UP12"/>
    <property type="match status" value="1"/>
</dbReference>
<dbReference type="Pfam" id="PF00582">
    <property type="entry name" value="Usp"/>
    <property type="match status" value="1"/>
</dbReference>
<dbReference type="PIRSF" id="PIRSF006276">
    <property type="entry name" value="UspA"/>
    <property type="match status" value="1"/>
</dbReference>
<dbReference type="PRINTS" id="PR01438">
    <property type="entry name" value="UNVRSLSTRESS"/>
</dbReference>
<dbReference type="SUPFAM" id="SSF52402">
    <property type="entry name" value="Adenine nucleotide alpha hydrolases-like"/>
    <property type="match status" value="1"/>
</dbReference>
<feature type="chain" id="PRO_0000288892" description="Putative universal stress protein SAS1637">
    <location>
        <begin position="1"/>
        <end position="166"/>
    </location>
</feature>
<proteinExistence type="inferred from homology"/>
<accession>Q6G8L7</accession>
<organism>
    <name type="scientific">Staphylococcus aureus (strain MSSA476)</name>
    <dbReference type="NCBI Taxonomy" id="282459"/>
    <lineage>
        <taxon>Bacteria</taxon>
        <taxon>Bacillati</taxon>
        <taxon>Bacillota</taxon>
        <taxon>Bacilli</taxon>
        <taxon>Bacillales</taxon>
        <taxon>Staphylococcaceae</taxon>
        <taxon>Staphylococcus</taxon>
    </lineage>
</organism>
<comment type="subcellular location">
    <subcellularLocation>
        <location evidence="1">Cytoplasm</location>
    </subcellularLocation>
</comment>
<comment type="similarity">
    <text evidence="2">Belongs to the universal stress protein A family.</text>
</comment>
<protein>
    <recommendedName>
        <fullName>Putative universal stress protein SAS1637</fullName>
    </recommendedName>
</protein>
<gene>
    <name type="ordered locus">SAS1637</name>
</gene>
<sequence>MITYKNILIAVDGSHEAEWAFNRAVGVAKRNDAKLTIVNVIDSRTYSSYEVYDAQFTEKSKHFAEELLNGYKEVATNAGVKDVETRLEFGSPKSIIPKKLAHEINADLIMSGTSGLNAVERFIVGSVSESIVRHAPCDVLVVRTEELPADFQPQVATTQLREKYQN</sequence>
<keyword id="KW-0963">Cytoplasm</keyword>